<evidence type="ECO:0000250" key="1"/>
<evidence type="ECO:0000250" key="2">
    <source>
        <dbReference type="UniProtKB" id="P78383"/>
    </source>
</evidence>
<evidence type="ECO:0000255" key="3"/>
<evidence type="ECO:0000303" key="4">
    <source>
    </source>
</evidence>
<evidence type="ECO:0000305" key="5"/>
<comment type="function">
    <text evidence="2">ATP:ADP antiporter that catalyzes the exchange of ATP and ADP across the endoplasmic reticulum (ER) membrane. Imports ATP from the cytosol to the ER lumen and exports ADP in the opposite direction. Regulates ER energy metabolism and protein biogenesis. Appears to be part of a calcium-dependent ER to cytosol low energy response axis, where calcium efflux from ER to the cytosol triggers ATP import into the ER lumen to maintain sufficient ATP supply. Provides ATP to ER chaperone HSPA5 that drives protein folding and trafficking in the ER. Can transport dATP, UTP or UDP in exchange for ATP, but the physiological relevance of this process remains to be established.</text>
</comment>
<comment type="catalytic activity">
    <reaction evidence="2">
        <text>ADP(in) + ATP(out) = ADP(out) + ATP(in)</text>
        <dbReference type="Rhea" id="RHEA:34999"/>
        <dbReference type="ChEBI" id="CHEBI:30616"/>
        <dbReference type="ChEBI" id="CHEBI:456216"/>
    </reaction>
    <physiologicalReaction direction="right-to-left" evidence="2">
        <dbReference type="Rhea" id="RHEA:35001"/>
    </physiologicalReaction>
</comment>
<comment type="catalytic activity">
    <reaction evidence="2">
        <text>UDP(out) + ATP(in) = UDP(in) + ATP(out)</text>
        <dbReference type="Rhea" id="RHEA:73707"/>
        <dbReference type="ChEBI" id="CHEBI:30616"/>
        <dbReference type="ChEBI" id="CHEBI:58223"/>
    </reaction>
    <physiologicalReaction direction="left-to-right" evidence="2">
        <dbReference type="Rhea" id="RHEA:73708"/>
    </physiologicalReaction>
</comment>
<comment type="catalytic activity">
    <reaction evidence="2">
        <text>UTP(out) + ATP(in) = UTP(in) + ATP(out)</text>
        <dbReference type="Rhea" id="RHEA:73711"/>
        <dbReference type="ChEBI" id="CHEBI:30616"/>
        <dbReference type="ChEBI" id="CHEBI:46398"/>
    </reaction>
    <physiologicalReaction direction="left-to-right" evidence="2">
        <dbReference type="Rhea" id="RHEA:73712"/>
    </physiologicalReaction>
</comment>
<comment type="catalytic activity">
    <reaction evidence="2">
        <text>dATP(out) + ATP(in) = dATP(in) + ATP(out)</text>
        <dbReference type="Rhea" id="RHEA:73715"/>
        <dbReference type="ChEBI" id="CHEBI:30616"/>
        <dbReference type="ChEBI" id="CHEBI:61404"/>
    </reaction>
    <physiologicalReaction direction="left-to-right" evidence="2">
        <dbReference type="Rhea" id="RHEA:73716"/>
    </physiologicalReaction>
</comment>
<comment type="subcellular location">
    <subcellularLocation>
        <location evidence="2">Endoplasmic reticulum membrane</location>
        <topology evidence="3">Multi-pass membrane protein</topology>
    </subcellularLocation>
</comment>
<comment type="alternative products">
    <event type="alternative splicing"/>
    <isoform>
        <id>P97858-1</id>
        <name>1</name>
        <sequence type="displayed"/>
    </isoform>
    <isoform>
        <id>P97858-2</id>
        <name>2</name>
        <sequence type="described" ref="VSP_016192"/>
    </isoform>
</comment>
<comment type="domain">
    <text evidence="1">The di-lysine motif confers endoplasmic reticulum localization for type I membrane proteins.</text>
</comment>
<comment type="similarity">
    <text evidence="5">Belongs to the nucleotide-sugar transporter family. SLC35B subfamily.</text>
</comment>
<reference key="1">
    <citation type="journal article" date="1996" name="J. Biochem.">
        <title>Molecular cloning and characterization of a novel isoform of the human UDP-galactose transporter, and of related complementary DNAs belonging to the nucleotide-sugar transporter gene family.</title>
        <authorList>
            <person name="Ishida N."/>
            <person name="Miura N."/>
            <person name="Yoshioka S."/>
            <person name="Kawakita M."/>
        </authorList>
    </citation>
    <scope>NUCLEOTIDE SEQUENCE [MRNA] (ISOFORM 1)</scope>
</reference>
<reference key="2">
    <citation type="journal article" date="2005" name="Science">
        <title>The transcriptional landscape of the mammalian genome.</title>
        <authorList>
            <person name="Carninci P."/>
            <person name="Kasukawa T."/>
            <person name="Katayama S."/>
            <person name="Gough J."/>
            <person name="Frith M.C."/>
            <person name="Maeda N."/>
            <person name="Oyama R."/>
            <person name="Ravasi T."/>
            <person name="Lenhard B."/>
            <person name="Wells C."/>
            <person name="Kodzius R."/>
            <person name="Shimokawa K."/>
            <person name="Bajic V.B."/>
            <person name="Brenner S.E."/>
            <person name="Batalov S."/>
            <person name="Forrest A.R."/>
            <person name="Zavolan M."/>
            <person name="Davis M.J."/>
            <person name="Wilming L.G."/>
            <person name="Aidinis V."/>
            <person name="Allen J.E."/>
            <person name="Ambesi-Impiombato A."/>
            <person name="Apweiler R."/>
            <person name="Aturaliya R.N."/>
            <person name="Bailey T.L."/>
            <person name="Bansal M."/>
            <person name="Baxter L."/>
            <person name="Beisel K.W."/>
            <person name="Bersano T."/>
            <person name="Bono H."/>
            <person name="Chalk A.M."/>
            <person name="Chiu K.P."/>
            <person name="Choudhary V."/>
            <person name="Christoffels A."/>
            <person name="Clutterbuck D.R."/>
            <person name="Crowe M.L."/>
            <person name="Dalla E."/>
            <person name="Dalrymple B.P."/>
            <person name="de Bono B."/>
            <person name="Della Gatta G."/>
            <person name="di Bernardo D."/>
            <person name="Down T."/>
            <person name="Engstrom P."/>
            <person name="Fagiolini M."/>
            <person name="Faulkner G."/>
            <person name="Fletcher C.F."/>
            <person name="Fukushima T."/>
            <person name="Furuno M."/>
            <person name="Futaki S."/>
            <person name="Gariboldi M."/>
            <person name="Georgii-Hemming P."/>
            <person name="Gingeras T.R."/>
            <person name="Gojobori T."/>
            <person name="Green R.E."/>
            <person name="Gustincich S."/>
            <person name="Harbers M."/>
            <person name="Hayashi Y."/>
            <person name="Hensch T.K."/>
            <person name="Hirokawa N."/>
            <person name="Hill D."/>
            <person name="Huminiecki L."/>
            <person name="Iacono M."/>
            <person name="Ikeo K."/>
            <person name="Iwama A."/>
            <person name="Ishikawa T."/>
            <person name="Jakt M."/>
            <person name="Kanapin A."/>
            <person name="Katoh M."/>
            <person name="Kawasawa Y."/>
            <person name="Kelso J."/>
            <person name="Kitamura H."/>
            <person name="Kitano H."/>
            <person name="Kollias G."/>
            <person name="Krishnan S.P."/>
            <person name="Kruger A."/>
            <person name="Kummerfeld S.K."/>
            <person name="Kurochkin I.V."/>
            <person name="Lareau L.F."/>
            <person name="Lazarevic D."/>
            <person name="Lipovich L."/>
            <person name="Liu J."/>
            <person name="Liuni S."/>
            <person name="McWilliam S."/>
            <person name="Madan Babu M."/>
            <person name="Madera M."/>
            <person name="Marchionni L."/>
            <person name="Matsuda H."/>
            <person name="Matsuzawa S."/>
            <person name="Miki H."/>
            <person name="Mignone F."/>
            <person name="Miyake S."/>
            <person name="Morris K."/>
            <person name="Mottagui-Tabar S."/>
            <person name="Mulder N."/>
            <person name="Nakano N."/>
            <person name="Nakauchi H."/>
            <person name="Ng P."/>
            <person name="Nilsson R."/>
            <person name="Nishiguchi S."/>
            <person name="Nishikawa S."/>
            <person name="Nori F."/>
            <person name="Ohara O."/>
            <person name="Okazaki Y."/>
            <person name="Orlando V."/>
            <person name="Pang K.C."/>
            <person name="Pavan W.J."/>
            <person name="Pavesi G."/>
            <person name="Pesole G."/>
            <person name="Petrovsky N."/>
            <person name="Piazza S."/>
            <person name="Reed J."/>
            <person name="Reid J.F."/>
            <person name="Ring B.Z."/>
            <person name="Ringwald M."/>
            <person name="Rost B."/>
            <person name="Ruan Y."/>
            <person name="Salzberg S.L."/>
            <person name="Sandelin A."/>
            <person name="Schneider C."/>
            <person name="Schoenbach C."/>
            <person name="Sekiguchi K."/>
            <person name="Semple C.A."/>
            <person name="Seno S."/>
            <person name="Sessa L."/>
            <person name="Sheng Y."/>
            <person name="Shibata Y."/>
            <person name="Shimada H."/>
            <person name="Shimada K."/>
            <person name="Silva D."/>
            <person name="Sinclair B."/>
            <person name="Sperling S."/>
            <person name="Stupka E."/>
            <person name="Sugiura K."/>
            <person name="Sultana R."/>
            <person name="Takenaka Y."/>
            <person name="Taki K."/>
            <person name="Tammoja K."/>
            <person name="Tan S.L."/>
            <person name="Tang S."/>
            <person name="Taylor M.S."/>
            <person name="Tegner J."/>
            <person name="Teichmann S.A."/>
            <person name="Ueda H.R."/>
            <person name="van Nimwegen E."/>
            <person name="Verardo R."/>
            <person name="Wei C.L."/>
            <person name="Yagi K."/>
            <person name="Yamanishi H."/>
            <person name="Zabarovsky E."/>
            <person name="Zhu S."/>
            <person name="Zimmer A."/>
            <person name="Hide W."/>
            <person name="Bult C."/>
            <person name="Grimmond S.M."/>
            <person name="Teasdale R.D."/>
            <person name="Liu E.T."/>
            <person name="Brusic V."/>
            <person name="Quackenbush J."/>
            <person name="Wahlestedt C."/>
            <person name="Mattick J.S."/>
            <person name="Hume D.A."/>
            <person name="Kai C."/>
            <person name="Sasaki D."/>
            <person name="Tomaru Y."/>
            <person name="Fukuda S."/>
            <person name="Kanamori-Katayama M."/>
            <person name="Suzuki M."/>
            <person name="Aoki J."/>
            <person name="Arakawa T."/>
            <person name="Iida J."/>
            <person name="Imamura K."/>
            <person name="Itoh M."/>
            <person name="Kato T."/>
            <person name="Kawaji H."/>
            <person name="Kawagashira N."/>
            <person name="Kawashima T."/>
            <person name="Kojima M."/>
            <person name="Kondo S."/>
            <person name="Konno H."/>
            <person name="Nakano K."/>
            <person name="Ninomiya N."/>
            <person name="Nishio T."/>
            <person name="Okada M."/>
            <person name="Plessy C."/>
            <person name="Shibata K."/>
            <person name="Shiraki T."/>
            <person name="Suzuki S."/>
            <person name="Tagami M."/>
            <person name="Waki K."/>
            <person name="Watahiki A."/>
            <person name="Okamura-Oho Y."/>
            <person name="Suzuki H."/>
            <person name="Kawai J."/>
            <person name="Hayashizaki Y."/>
        </authorList>
    </citation>
    <scope>NUCLEOTIDE SEQUENCE [LARGE SCALE MRNA] (ISOFORM 2)</scope>
    <source>
        <strain>C57BL/6J</strain>
        <tissue>Brain</tissue>
    </source>
</reference>
<reference key="3">
    <citation type="journal article" date="2009" name="PLoS Biol.">
        <title>Lineage-specific biology revealed by a finished genome assembly of the mouse.</title>
        <authorList>
            <person name="Church D.M."/>
            <person name="Goodstadt L."/>
            <person name="Hillier L.W."/>
            <person name="Zody M.C."/>
            <person name="Goldstein S."/>
            <person name="She X."/>
            <person name="Bult C.J."/>
            <person name="Agarwala R."/>
            <person name="Cherry J.L."/>
            <person name="DiCuccio M."/>
            <person name="Hlavina W."/>
            <person name="Kapustin Y."/>
            <person name="Meric P."/>
            <person name="Maglott D."/>
            <person name="Birtle Z."/>
            <person name="Marques A.C."/>
            <person name="Graves T."/>
            <person name="Zhou S."/>
            <person name="Teague B."/>
            <person name="Potamousis K."/>
            <person name="Churas C."/>
            <person name="Place M."/>
            <person name="Herschleb J."/>
            <person name="Runnheim R."/>
            <person name="Forrest D."/>
            <person name="Amos-Landgraf J."/>
            <person name="Schwartz D.C."/>
            <person name="Cheng Z."/>
            <person name="Lindblad-Toh K."/>
            <person name="Eichler E.E."/>
            <person name="Ponting C.P."/>
        </authorList>
    </citation>
    <scope>NUCLEOTIDE SEQUENCE [LARGE SCALE GENOMIC DNA]</scope>
    <source>
        <strain>C57BL/6J</strain>
    </source>
</reference>
<reference key="4">
    <citation type="journal article" date="2004" name="Genome Res.">
        <title>The status, quality, and expansion of the NIH full-length cDNA project: the Mammalian Gene Collection (MGC).</title>
        <authorList>
            <consortium name="The MGC Project Team"/>
        </authorList>
    </citation>
    <scope>NUCLEOTIDE SEQUENCE [LARGE SCALE MRNA] (ISOFORM 1)</scope>
    <source>
        <strain>Czech II</strain>
        <tissue>Mammary tumor</tissue>
    </source>
</reference>
<reference key="5">
    <citation type="journal article" date="2010" name="Cell">
        <title>A tissue-specific atlas of mouse protein phosphorylation and expression.</title>
        <authorList>
            <person name="Huttlin E.L."/>
            <person name="Jedrychowski M.P."/>
            <person name="Elias J.E."/>
            <person name="Goswami T."/>
            <person name="Rad R."/>
            <person name="Beausoleil S.A."/>
            <person name="Villen J."/>
            <person name="Haas W."/>
            <person name="Sowa M.E."/>
            <person name="Gygi S.P."/>
        </authorList>
    </citation>
    <scope>IDENTIFICATION BY MASS SPECTROMETRY [LARGE SCALE ANALYSIS]</scope>
    <source>
        <tissue>Pancreas</tissue>
    </source>
</reference>
<name>S35B1_MOUSE</name>
<accession>P97858</accession>
<accession>Q8CF70</accession>
<gene>
    <name type="primary">Slc35b1</name>
    <name type="synonym">Ugalt2</name>
</gene>
<sequence>MAASRSLVPDRLRLPLCFLGVFVCYFYYGILQEKITRGKYGEGPKQETFTFALTLVFIQCVINAMFAKILIQFFDTARVDRTRTWLYAACSVSYVGAMVSSNSALQFVNYPTQVLGKSCKPIPVMLLGVTLLKKKYPLAKYLCVLLIVAGVALFMYKPKKVVGIEEHTVGFGELLLLMSLTLDGLTGVSQDHMRAHYQTGSNHMMLNINLWSTFLLGAGILFTGELWEFLSFAERYPTIIYNILLFGLTSALGQSFIFMTVVYFGPLTCSIITTTRKFFTILASVILFANPISSMQWVGTVLVFLGLGLDAKFGKGTKKTSH</sequence>
<feature type="chain" id="PRO_0000213367" description="Solute carrier family 35 member B1">
    <location>
        <begin position="1"/>
        <end position="322"/>
    </location>
</feature>
<feature type="transmembrane region" description="Helical" evidence="3">
    <location>
        <begin position="12"/>
        <end position="32"/>
    </location>
</feature>
<feature type="transmembrane region" description="Helical" evidence="3">
    <location>
        <begin position="51"/>
        <end position="71"/>
    </location>
</feature>
<feature type="transmembrane region" description="Helical" evidence="3">
    <location>
        <begin position="85"/>
        <end position="105"/>
    </location>
</feature>
<feature type="transmembrane region" description="Helical" evidence="3">
    <location>
        <begin position="136"/>
        <end position="156"/>
    </location>
</feature>
<feature type="transmembrane region" description="Helical" evidence="3">
    <location>
        <begin position="168"/>
        <end position="188"/>
    </location>
</feature>
<feature type="transmembrane region" description="Helical" evidence="3">
    <location>
        <begin position="210"/>
        <end position="230"/>
    </location>
</feature>
<feature type="transmembrane region" description="Helical" evidence="3">
    <location>
        <begin position="243"/>
        <end position="263"/>
    </location>
</feature>
<feature type="transmembrane region" description="Helical" evidence="3">
    <location>
        <begin position="285"/>
        <end position="305"/>
    </location>
</feature>
<feature type="short sequence motif" description="Di-lysine motif">
    <location>
        <begin position="318"/>
        <end position="322"/>
    </location>
</feature>
<feature type="splice variant" id="VSP_016192" description="In isoform 2." evidence="4">
    <location>
        <begin position="1"/>
        <end position="97"/>
    </location>
</feature>
<dbReference type="EMBL" id="D87990">
    <property type="protein sequence ID" value="BAA13526.1"/>
    <property type="molecule type" value="mRNA"/>
</dbReference>
<dbReference type="EMBL" id="AK002961">
    <property type="protein sequence ID" value="BAC25013.1"/>
    <property type="molecule type" value="mRNA"/>
</dbReference>
<dbReference type="EMBL" id="AL662875">
    <property type="status" value="NOT_ANNOTATED_CDS"/>
    <property type="molecule type" value="Genomic_DNA"/>
</dbReference>
<dbReference type="EMBL" id="BC002029">
    <property type="protein sequence ID" value="AAH02029.1"/>
    <property type="molecule type" value="mRNA"/>
</dbReference>
<dbReference type="CCDS" id="CCDS25277.1">
    <molecule id="P97858-1"/>
</dbReference>
<dbReference type="PIR" id="JC5025">
    <property type="entry name" value="JC5025"/>
</dbReference>
<dbReference type="RefSeq" id="NP_001344726.1">
    <molecule id="P97858-2"/>
    <property type="nucleotide sequence ID" value="NM_001357797.2"/>
</dbReference>
<dbReference type="RefSeq" id="NP_058032.3">
    <molecule id="P97858-1"/>
    <property type="nucleotide sequence ID" value="NM_016752.4"/>
</dbReference>
<dbReference type="RefSeq" id="XP_006532048.1">
    <property type="nucleotide sequence ID" value="XM_006531985.1"/>
</dbReference>
<dbReference type="SMR" id="P97858"/>
<dbReference type="BioGRID" id="225355">
    <property type="interactions" value="1"/>
</dbReference>
<dbReference type="FunCoup" id="P97858">
    <property type="interactions" value="1113"/>
</dbReference>
<dbReference type="STRING" id="10090.ENSMUSP00000021243"/>
<dbReference type="SwissPalm" id="P97858"/>
<dbReference type="jPOST" id="P97858"/>
<dbReference type="PaxDb" id="10090-ENSMUSP00000021243"/>
<dbReference type="PeptideAtlas" id="P97858"/>
<dbReference type="ProteomicsDB" id="260772">
    <molecule id="P97858-1"/>
</dbReference>
<dbReference type="ProteomicsDB" id="260773">
    <molecule id="P97858-2"/>
</dbReference>
<dbReference type="Pumba" id="P97858"/>
<dbReference type="Antibodypedia" id="17968">
    <property type="antibodies" value="63 antibodies from 18 providers"/>
</dbReference>
<dbReference type="DNASU" id="110172"/>
<dbReference type="Ensembl" id="ENSMUST00000021243.16">
    <molecule id="P97858-1"/>
    <property type="protein sequence ID" value="ENSMUSP00000021243.10"/>
    <property type="gene ID" value="ENSMUSG00000020873.16"/>
</dbReference>
<dbReference type="GeneID" id="110172"/>
<dbReference type="KEGG" id="mmu:110172"/>
<dbReference type="UCSC" id="uc007lah.1">
    <molecule id="P97858-1"/>
    <property type="organism name" value="mouse"/>
</dbReference>
<dbReference type="AGR" id="MGI:1343133"/>
<dbReference type="CTD" id="10237"/>
<dbReference type="MGI" id="MGI:1343133">
    <property type="gene designation" value="Slc35b1"/>
</dbReference>
<dbReference type="VEuPathDB" id="HostDB:ENSMUSG00000020873"/>
<dbReference type="eggNOG" id="KOG1580">
    <property type="taxonomic scope" value="Eukaryota"/>
</dbReference>
<dbReference type="GeneTree" id="ENSGT00940000157900"/>
<dbReference type="HOGENOM" id="CLU_036019_1_0_1"/>
<dbReference type="InParanoid" id="P97858"/>
<dbReference type="OMA" id="CGAIGQV"/>
<dbReference type="OrthoDB" id="78344at2759"/>
<dbReference type="PhylomeDB" id="P97858"/>
<dbReference type="TreeFam" id="TF105967"/>
<dbReference type="BioGRID-ORCS" id="110172">
    <property type="hits" value="24 hits in 77 CRISPR screens"/>
</dbReference>
<dbReference type="ChiTaRS" id="Slc35b1">
    <property type="organism name" value="mouse"/>
</dbReference>
<dbReference type="PRO" id="PR:P97858"/>
<dbReference type="Proteomes" id="UP000000589">
    <property type="component" value="Chromosome 11"/>
</dbReference>
<dbReference type="RNAct" id="P97858">
    <property type="molecule type" value="protein"/>
</dbReference>
<dbReference type="Bgee" id="ENSMUSG00000020873">
    <property type="expression patterns" value="Expressed in small intestine Peyer's patch and 287 other cell types or tissues"/>
</dbReference>
<dbReference type="ExpressionAtlas" id="P97858">
    <property type="expression patterns" value="baseline and differential"/>
</dbReference>
<dbReference type="GO" id="GO:0005789">
    <property type="term" value="C:endoplasmic reticulum membrane"/>
    <property type="evidence" value="ECO:0007669"/>
    <property type="project" value="UniProtKB-SubCell"/>
</dbReference>
<dbReference type="GO" id="GO:0005654">
    <property type="term" value="C:nucleoplasm"/>
    <property type="evidence" value="ECO:0007669"/>
    <property type="project" value="Ensembl"/>
</dbReference>
<dbReference type="GO" id="GO:0005471">
    <property type="term" value="F:ATP:ADP antiporter activity"/>
    <property type="evidence" value="ECO:0007669"/>
    <property type="project" value="Ensembl"/>
</dbReference>
<dbReference type="Gene3D" id="1.10.3730.20">
    <property type="match status" value="1"/>
</dbReference>
<dbReference type="InterPro" id="IPR013657">
    <property type="entry name" value="SCL35B1-4/HUT1"/>
</dbReference>
<dbReference type="PANTHER" id="PTHR10778">
    <property type="entry name" value="SOLUTE CARRIER FAMILY 35 MEMBER B"/>
    <property type="match status" value="1"/>
</dbReference>
<dbReference type="PANTHER" id="PTHR10778:SF10">
    <property type="entry name" value="SOLUTE CARRIER FAMILY 35 MEMBER B1"/>
    <property type="match status" value="1"/>
</dbReference>
<dbReference type="Pfam" id="PF08449">
    <property type="entry name" value="UAA"/>
    <property type="match status" value="1"/>
</dbReference>
<dbReference type="SUPFAM" id="SSF103481">
    <property type="entry name" value="Multidrug resistance efflux transporter EmrE"/>
    <property type="match status" value="2"/>
</dbReference>
<organism>
    <name type="scientific">Mus musculus</name>
    <name type="common">Mouse</name>
    <dbReference type="NCBI Taxonomy" id="10090"/>
    <lineage>
        <taxon>Eukaryota</taxon>
        <taxon>Metazoa</taxon>
        <taxon>Chordata</taxon>
        <taxon>Craniata</taxon>
        <taxon>Vertebrata</taxon>
        <taxon>Euteleostomi</taxon>
        <taxon>Mammalia</taxon>
        <taxon>Eutheria</taxon>
        <taxon>Euarchontoglires</taxon>
        <taxon>Glires</taxon>
        <taxon>Rodentia</taxon>
        <taxon>Myomorpha</taxon>
        <taxon>Muroidea</taxon>
        <taxon>Muridae</taxon>
        <taxon>Murinae</taxon>
        <taxon>Mus</taxon>
        <taxon>Mus</taxon>
    </lineage>
</organism>
<protein>
    <recommendedName>
        <fullName>Solute carrier family 35 member B1</fullName>
    </recommendedName>
    <alternativeName>
        <fullName evidence="2">ATP/ADP exchanger ER</fullName>
        <shortName evidence="2">AXER</shortName>
    </alternativeName>
    <alternativeName>
        <fullName evidence="2">Endoplasmic reticulum ATP/ADP translocase</fullName>
    </alternativeName>
    <alternativeName>
        <fullName evidence="2">UDP-galactose transporter-related protein 1</fullName>
        <shortName evidence="2">UGTrel1</shortName>
    </alternativeName>
</protein>
<proteinExistence type="evidence at protein level"/>
<keyword id="KW-0025">Alternative splicing</keyword>
<keyword id="KW-0050">Antiport</keyword>
<keyword id="KW-0256">Endoplasmic reticulum</keyword>
<keyword id="KW-0472">Membrane</keyword>
<keyword id="KW-1185">Reference proteome</keyword>
<keyword id="KW-0812">Transmembrane</keyword>
<keyword id="KW-1133">Transmembrane helix</keyword>
<keyword id="KW-0813">Transport</keyword>